<keyword id="KW-0903">Direct protein sequencing</keyword>
<keyword id="KW-0677">Repeat</keyword>
<keyword id="KW-0964">Secreted</keyword>
<keyword id="KW-0732">Signal</keyword>
<dbReference type="EMBL" id="HE610385">
    <property type="protein sequence ID" value="CCE46159.1"/>
    <property type="molecule type" value="mRNA"/>
</dbReference>
<dbReference type="SMR" id="H2A0L8"/>
<dbReference type="GO" id="GO:0005576">
    <property type="term" value="C:extracellular region"/>
    <property type="evidence" value="ECO:0007669"/>
    <property type="project" value="UniProtKB-SubCell"/>
</dbReference>
<dbReference type="CDD" id="cd00063">
    <property type="entry name" value="FN3"/>
    <property type="match status" value="5"/>
</dbReference>
<dbReference type="Gene3D" id="2.60.40.10">
    <property type="entry name" value="Immunoglobulins"/>
    <property type="match status" value="4"/>
</dbReference>
<dbReference type="InterPro" id="IPR050991">
    <property type="entry name" value="ECM_Regulatory_Proteins"/>
</dbReference>
<dbReference type="InterPro" id="IPR003961">
    <property type="entry name" value="FN3_dom"/>
</dbReference>
<dbReference type="InterPro" id="IPR036116">
    <property type="entry name" value="FN3_sf"/>
</dbReference>
<dbReference type="InterPro" id="IPR013783">
    <property type="entry name" value="Ig-like_fold"/>
</dbReference>
<dbReference type="PANTHER" id="PTHR46708:SF2">
    <property type="entry name" value="FIBRONECTIN TYPE-III DOMAIN-CONTAINING PROTEIN"/>
    <property type="match status" value="1"/>
</dbReference>
<dbReference type="PANTHER" id="PTHR46708">
    <property type="entry name" value="TENASCIN"/>
    <property type="match status" value="1"/>
</dbReference>
<dbReference type="Pfam" id="PF00041">
    <property type="entry name" value="fn3"/>
    <property type="match status" value="3"/>
</dbReference>
<dbReference type="SMART" id="SM00060">
    <property type="entry name" value="FN3"/>
    <property type="match status" value="4"/>
</dbReference>
<dbReference type="SUPFAM" id="SSF49265">
    <property type="entry name" value="Fibronectin type III"/>
    <property type="match status" value="3"/>
</dbReference>
<dbReference type="PROSITE" id="PS50853">
    <property type="entry name" value="FN3"/>
    <property type="match status" value="5"/>
</dbReference>
<evidence type="ECO:0000255" key="1"/>
<evidence type="ECO:0000255" key="2">
    <source>
        <dbReference type="PROSITE-ProRule" id="PRU00316"/>
    </source>
</evidence>
<evidence type="ECO:0000269" key="3">
    <source>
    </source>
</evidence>
<evidence type="ECO:0000305" key="4"/>
<organism>
    <name type="scientific">Margaritifera margaritifera</name>
    <name type="common">Freshwater pearl mussel</name>
    <dbReference type="NCBI Taxonomy" id="102329"/>
    <lineage>
        <taxon>Eukaryota</taxon>
        <taxon>Metazoa</taxon>
        <taxon>Spiralia</taxon>
        <taxon>Lophotrochozoa</taxon>
        <taxon>Mollusca</taxon>
        <taxon>Bivalvia</taxon>
        <taxon>Autobranchia</taxon>
        <taxon>Pteriomorphia</taxon>
        <taxon>Pterioida</taxon>
        <taxon>Pterioidea</taxon>
        <taxon>Pteriidae</taxon>
        <taxon>Pinctada</taxon>
    </lineage>
</organism>
<name>FND2_PINMG</name>
<proteinExistence type="evidence at protein level"/>
<comment type="subcellular location">
    <subcellularLocation>
        <location evidence="3">Secreted</location>
    </subcellularLocation>
</comment>
<comment type="tissue specificity">
    <text evidence="3">Prismatic layer of shell (at protein level).</text>
</comment>
<protein>
    <recommendedName>
        <fullName>Fibronectin type III domain-containing protein 2</fullName>
    </recommendedName>
</protein>
<feature type="signal peptide" evidence="1">
    <location>
        <begin position="1"/>
        <end position="19"/>
    </location>
</feature>
<feature type="chain" id="PRO_0000417949" description="Fibronectin type III domain-containing protein 2" evidence="1">
    <location>
        <begin position="20"/>
        <end position="624"/>
    </location>
</feature>
<feature type="domain" description="Fibronectin type-III 1" evidence="2">
    <location>
        <begin position="131"/>
        <end position="236"/>
    </location>
</feature>
<feature type="domain" description="Fibronectin type-III 2" evidence="2">
    <location>
        <begin position="240"/>
        <end position="330"/>
    </location>
</feature>
<feature type="domain" description="Fibronectin type-III 3" evidence="2">
    <location>
        <begin position="334"/>
        <end position="430"/>
    </location>
</feature>
<feature type="domain" description="Fibronectin type-III 4" evidence="2">
    <location>
        <begin position="431"/>
        <end position="524"/>
    </location>
</feature>
<feature type="domain" description="Fibronectin type-III 5" evidence="2">
    <location>
        <begin position="527"/>
        <end position="624"/>
    </location>
</feature>
<sequence length="624" mass="69566">MREQFSVLVISLLFSSSYGQVGQMGPPPGQSGQPWTLAEFDAIDTHLKNIQMYARSLQDIVYQERMKQYPFMPNSTAGQPNMGYSTFANDVINRLTKIEFETGELVTQYPLCPSGGTGGNPYPVIPPNAPPPQNVMIQSETIGNSSSVIVSWDRPNVVGTDVRLDDLQYKVYFAPLDEYGQQTAEAIVFSICSVNQTVASITDLYPRSFYKVSVGTVICSTSESSSGAKSLKTPDIIPSEPTNLRVDGTKPNAIALRWDLPLLMGTLANYTIYVTSENGTGFEVAVDPTQVNAILYDLIEGTRYVISVSAFSDNGESPKSSSIEVMTDVFVPDMPRFFQVIFVNTTSVHLVWEPPNPGAGMIRYYSINYTDSLYSQFFNFKTPNAKITTAIITGLQPATTYYFRAFAHTGRRAGAGSAVIMQDTDITVPTVPRELYAQKAKNDPPRARLQWLPPAKTYGSLKNYSIHWGVKNGATRKEEIEPGLLEWYSDFLDDNTEHEFKLYAQNEKGYGPAATVTHRTPKRDTVVPPNVKVDRKKGKNNETVLVVSWNPITQPGKQVSGFRILYRKFEWVYTGRWSLKEIPDPNARSATIGVENSNYSFIVVVRGYRNPRPNMQVNPPWPGR</sequence>
<reference evidence="4" key="1">
    <citation type="journal article" date="2010" name="BMC Genomics">
        <title>Transcriptome and proteome analysis of Pinctada margaritifera calcifying mantle and shell: focus on biomineralization.</title>
        <authorList>
            <person name="Joubert C."/>
            <person name="Piquemal D."/>
            <person name="Marie B."/>
            <person name="Manchon L."/>
            <person name="Pierrat F."/>
            <person name="Zanella-Cleon I."/>
            <person name="Cochennec-Laureau N."/>
            <person name="Gueguen Y."/>
            <person name="Montagnani C."/>
        </authorList>
    </citation>
    <scope>NUCLEOTIDE SEQUENCE [MRNA]</scope>
    <scope>IDENTIFICATION</scope>
    <source>
        <tissue>Mantle</tissue>
    </source>
</reference>
<reference key="2">
    <citation type="journal article" date="2012" name="Proc. Natl. Acad. Sci. U.S.A.">
        <title>Different secretory repertoires control the biomineralization processes of prism and nacre deposition of the pearl oyster shell.</title>
        <authorList>
            <person name="Marie B."/>
            <person name="Joubert C."/>
            <person name="Tayale A."/>
            <person name="Zanella-Cleon I."/>
            <person name="Belliard C."/>
            <person name="Piquemal D."/>
            <person name="Cochennec-Laureau N."/>
            <person name="Marin F."/>
            <person name="Gueguen Y."/>
            <person name="Montagnani C."/>
        </authorList>
    </citation>
    <scope>PROTEIN SEQUENCE OF 56-65; 164-170; 291-303; 509-519; 523-532 AND 568-576</scope>
    <scope>SUBCELLULAR LOCATION</scope>
    <scope>TISSUE SPECIFICITY</scope>
    <source>
        <tissue>Shell</tissue>
    </source>
</reference>
<accession>H2A0L8</accession>